<feature type="chain" id="PRO_1000066542" description="Acyl carrier protein">
    <location>
        <begin position="1"/>
        <end position="79"/>
    </location>
</feature>
<feature type="domain" description="Carrier" evidence="2">
    <location>
        <begin position="2"/>
        <end position="77"/>
    </location>
</feature>
<feature type="modified residue" description="O-(pantetheine 4'-phosphoryl)serine" evidence="2">
    <location>
        <position position="37"/>
    </location>
</feature>
<sequence length="79" mass="8596">MSEVAEKVKKIVVEHLGVDEAKVTPEASFIDDLGADSLDTVELVMAFEEAFGVEIPEDAAEKIGTVKDAIDYIEKKKAE</sequence>
<accession>A5FYQ3</accession>
<organism>
    <name type="scientific">Acidiphilium cryptum (strain JF-5)</name>
    <dbReference type="NCBI Taxonomy" id="349163"/>
    <lineage>
        <taxon>Bacteria</taxon>
        <taxon>Pseudomonadati</taxon>
        <taxon>Pseudomonadota</taxon>
        <taxon>Alphaproteobacteria</taxon>
        <taxon>Acetobacterales</taxon>
        <taxon>Acidocellaceae</taxon>
        <taxon>Acidiphilium</taxon>
    </lineage>
</organism>
<keyword id="KW-0963">Cytoplasm</keyword>
<keyword id="KW-0275">Fatty acid biosynthesis</keyword>
<keyword id="KW-0276">Fatty acid metabolism</keyword>
<keyword id="KW-0444">Lipid biosynthesis</keyword>
<keyword id="KW-0443">Lipid metabolism</keyword>
<keyword id="KW-0596">Phosphopantetheine</keyword>
<keyword id="KW-0597">Phosphoprotein</keyword>
<keyword id="KW-1185">Reference proteome</keyword>
<name>ACP_ACICJ</name>
<evidence type="ECO:0000255" key="1">
    <source>
        <dbReference type="HAMAP-Rule" id="MF_01217"/>
    </source>
</evidence>
<evidence type="ECO:0000255" key="2">
    <source>
        <dbReference type="PROSITE-ProRule" id="PRU00258"/>
    </source>
</evidence>
<gene>
    <name evidence="1" type="primary">acpP</name>
    <name type="ordered locus">Acry_1527</name>
</gene>
<proteinExistence type="inferred from homology"/>
<reference key="1">
    <citation type="submission" date="2007-05" db="EMBL/GenBank/DDBJ databases">
        <title>Complete sequence of chromosome of Acidiphilium cryptum JF-5.</title>
        <authorList>
            <consortium name="US DOE Joint Genome Institute"/>
            <person name="Copeland A."/>
            <person name="Lucas S."/>
            <person name="Lapidus A."/>
            <person name="Barry K."/>
            <person name="Detter J.C."/>
            <person name="Glavina del Rio T."/>
            <person name="Hammon N."/>
            <person name="Israni S."/>
            <person name="Dalin E."/>
            <person name="Tice H."/>
            <person name="Pitluck S."/>
            <person name="Sims D."/>
            <person name="Brettin T."/>
            <person name="Bruce D."/>
            <person name="Han C."/>
            <person name="Schmutz J."/>
            <person name="Larimer F."/>
            <person name="Land M."/>
            <person name="Hauser L."/>
            <person name="Kyrpides N."/>
            <person name="Kim E."/>
            <person name="Magnuson T."/>
            <person name="Richardson P."/>
        </authorList>
    </citation>
    <scope>NUCLEOTIDE SEQUENCE [LARGE SCALE GENOMIC DNA]</scope>
    <source>
        <strain>JF-5</strain>
    </source>
</reference>
<protein>
    <recommendedName>
        <fullName evidence="1">Acyl carrier protein</fullName>
        <shortName evidence="1">ACP</shortName>
    </recommendedName>
</protein>
<comment type="function">
    <text evidence="1">Carrier of the growing fatty acid chain in fatty acid biosynthesis.</text>
</comment>
<comment type="pathway">
    <text evidence="1">Lipid metabolism; fatty acid biosynthesis.</text>
</comment>
<comment type="subcellular location">
    <subcellularLocation>
        <location evidence="1">Cytoplasm</location>
    </subcellularLocation>
</comment>
<comment type="PTM">
    <text evidence="1">4'-phosphopantetheine is transferred from CoA to a specific serine of apo-ACP by AcpS. This modification is essential for activity because fatty acids are bound in thioester linkage to the sulfhydryl of the prosthetic group.</text>
</comment>
<comment type="similarity">
    <text evidence="1">Belongs to the acyl carrier protein (ACP) family.</text>
</comment>
<dbReference type="EMBL" id="CP000697">
    <property type="protein sequence ID" value="ABQ30735.1"/>
    <property type="molecule type" value="Genomic_DNA"/>
</dbReference>
<dbReference type="RefSeq" id="WP_007422686.1">
    <property type="nucleotide sequence ID" value="NC_009484.1"/>
</dbReference>
<dbReference type="SMR" id="A5FYQ3"/>
<dbReference type="STRING" id="349163.Acry_1527"/>
<dbReference type="KEGG" id="acr:Acry_1527"/>
<dbReference type="eggNOG" id="COG0236">
    <property type="taxonomic scope" value="Bacteria"/>
</dbReference>
<dbReference type="HOGENOM" id="CLU_108696_5_1_5"/>
<dbReference type="UniPathway" id="UPA00094"/>
<dbReference type="Proteomes" id="UP000000245">
    <property type="component" value="Chromosome"/>
</dbReference>
<dbReference type="GO" id="GO:0005829">
    <property type="term" value="C:cytosol"/>
    <property type="evidence" value="ECO:0007669"/>
    <property type="project" value="TreeGrafter"/>
</dbReference>
<dbReference type="GO" id="GO:0016020">
    <property type="term" value="C:membrane"/>
    <property type="evidence" value="ECO:0007669"/>
    <property type="project" value="GOC"/>
</dbReference>
<dbReference type="GO" id="GO:0000035">
    <property type="term" value="F:acyl binding"/>
    <property type="evidence" value="ECO:0007669"/>
    <property type="project" value="TreeGrafter"/>
</dbReference>
<dbReference type="GO" id="GO:0000036">
    <property type="term" value="F:acyl carrier activity"/>
    <property type="evidence" value="ECO:0007669"/>
    <property type="project" value="UniProtKB-UniRule"/>
</dbReference>
<dbReference type="GO" id="GO:0031177">
    <property type="term" value="F:phosphopantetheine binding"/>
    <property type="evidence" value="ECO:0007669"/>
    <property type="project" value="InterPro"/>
</dbReference>
<dbReference type="GO" id="GO:0009245">
    <property type="term" value="P:lipid A biosynthetic process"/>
    <property type="evidence" value="ECO:0007669"/>
    <property type="project" value="TreeGrafter"/>
</dbReference>
<dbReference type="FunFam" id="1.10.1200.10:FF:000001">
    <property type="entry name" value="Acyl carrier protein"/>
    <property type="match status" value="1"/>
</dbReference>
<dbReference type="Gene3D" id="1.10.1200.10">
    <property type="entry name" value="ACP-like"/>
    <property type="match status" value="1"/>
</dbReference>
<dbReference type="HAMAP" id="MF_01217">
    <property type="entry name" value="Acyl_carrier"/>
    <property type="match status" value="1"/>
</dbReference>
<dbReference type="InterPro" id="IPR003231">
    <property type="entry name" value="ACP"/>
</dbReference>
<dbReference type="InterPro" id="IPR036736">
    <property type="entry name" value="ACP-like_sf"/>
</dbReference>
<dbReference type="InterPro" id="IPR020806">
    <property type="entry name" value="PKS_PP-bd"/>
</dbReference>
<dbReference type="InterPro" id="IPR009081">
    <property type="entry name" value="PP-bd_ACP"/>
</dbReference>
<dbReference type="InterPro" id="IPR006162">
    <property type="entry name" value="Ppantetheine_attach_site"/>
</dbReference>
<dbReference type="NCBIfam" id="TIGR00517">
    <property type="entry name" value="acyl_carrier"/>
    <property type="match status" value="1"/>
</dbReference>
<dbReference type="NCBIfam" id="NF002148">
    <property type="entry name" value="PRK00982.1-2"/>
    <property type="match status" value="1"/>
</dbReference>
<dbReference type="NCBIfam" id="NF002149">
    <property type="entry name" value="PRK00982.1-3"/>
    <property type="match status" value="1"/>
</dbReference>
<dbReference type="NCBIfam" id="NF002150">
    <property type="entry name" value="PRK00982.1-4"/>
    <property type="match status" value="1"/>
</dbReference>
<dbReference type="NCBIfam" id="NF002151">
    <property type="entry name" value="PRK00982.1-5"/>
    <property type="match status" value="1"/>
</dbReference>
<dbReference type="PANTHER" id="PTHR20863">
    <property type="entry name" value="ACYL CARRIER PROTEIN"/>
    <property type="match status" value="1"/>
</dbReference>
<dbReference type="PANTHER" id="PTHR20863:SF76">
    <property type="entry name" value="CARRIER DOMAIN-CONTAINING PROTEIN"/>
    <property type="match status" value="1"/>
</dbReference>
<dbReference type="Pfam" id="PF00550">
    <property type="entry name" value="PP-binding"/>
    <property type="match status" value="1"/>
</dbReference>
<dbReference type="SMART" id="SM00823">
    <property type="entry name" value="PKS_PP"/>
    <property type="match status" value="1"/>
</dbReference>
<dbReference type="SUPFAM" id="SSF47336">
    <property type="entry name" value="ACP-like"/>
    <property type="match status" value="1"/>
</dbReference>
<dbReference type="PROSITE" id="PS50075">
    <property type="entry name" value="CARRIER"/>
    <property type="match status" value="1"/>
</dbReference>
<dbReference type="PROSITE" id="PS00012">
    <property type="entry name" value="PHOSPHOPANTETHEINE"/>
    <property type="match status" value="1"/>
</dbReference>